<feature type="signal peptide" evidence="2">
    <location>
        <begin position="1"/>
        <end position="23"/>
    </location>
</feature>
<feature type="chain" id="PRO_0000371674" description="Probable pectinesterase/pectinesterase inhibitor 17">
    <location>
        <begin position="24"/>
        <end position="511"/>
    </location>
</feature>
<feature type="region of interest" description="Pectinesterase inhibitor 17">
    <location>
        <begin position="24"/>
        <end position="171"/>
    </location>
</feature>
<feature type="region of interest" description="Pectinesterase 17">
    <location>
        <begin position="237"/>
        <end position="414"/>
    </location>
</feature>
<feature type="active site" description="Proton donor; for pectinesterase activity" evidence="3">
    <location>
        <position position="330"/>
    </location>
</feature>
<feature type="active site" description="Nucleophile; for pectinesterase activity" evidence="3">
    <location>
        <position position="351"/>
    </location>
</feature>
<feature type="binding site" evidence="1">
    <location>
        <position position="277"/>
    </location>
    <ligand>
        <name>substrate</name>
        <note>for pectinesterase activity</note>
    </ligand>
</feature>
<feature type="binding site" evidence="1">
    <location>
        <position position="307"/>
    </location>
    <ligand>
        <name>substrate</name>
        <note>for pectinesterase activity</note>
    </ligand>
</feature>
<feature type="binding site" evidence="1">
    <location>
        <position position="418"/>
    </location>
    <ligand>
        <name>substrate</name>
        <note>for pectinesterase activity</note>
    </ligand>
</feature>
<feature type="binding site" evidence="1">
    <location>
        <position position="420"/>
    </location>
    <ligand>
        <name>substrate</name>
        <note>for pectinesterase activity</note>
    </ligand>
</feature>
<feature type="site" description="Transition state stabilizer" evidence="1">
    <location>
        <position position="329"/>
    </location>
</feature>
<feature type="glycosylation site" description="N-linked (GlcNAc...) asparagine" evidence="2">
    <location>
        <position position="112"/>
    </location>
</feature>
<feature type="glycosylation site" description="N-linked (GlcNAc...) asparagine" evidence="2">
    <location>
        <position position="160"/>
    </location>
</feature>
<feature type="disulfide bond" evidence="1">
    <location>
        <begin position="344"/>
        <end position="364"/>
    </location>
</feature>
<name>PME17_ARATH</name>
<organism>
    <name type="scientific">Arabidopsis thaliana</name>
    <name type="common">Mouse-ear cress</name>
    <dbReference type="NCBI Taxonomy" id="3702"/>
    <lineage>
        <taxon>Eukaryota</taxon>
        <taxon>Viridiplantae</taxon>
        <taxon>Streptophyta</taxon>
        <taxon>Embryophyta</taxon>
        <taxon>Tracheophyta</taxon>
        <taxon>Spermatophyta</taxon>
        <taxon>Magnoliopsida</taxon>
        <taxon>eudicotyledons</taxon>
        <taxon>Gunneridae</taxon>
        <taxon>Pentapetalae</taxon>
        <taxon>rosids</taxon>
        <taxon>malvids</taxon>
        <taxon>Brassicales</taxon>
        <taxon>Brassicaceae</taxon>
        <taxon>Camelineae</taxon>
        <taxon>Arabidopsis</taxon>
    </lineage>
</organism>
<dbReference type="EC" id="3.1.1.11"/>
<dbReference type="EMBL" id="AC002387">
    <property type="protein sequence ID" value="AAB82640.2"/>
    <property type="molecule type" value="Genomic_DNA"/>
</dbReference>
<dbReference type="EMBL" id="CP002685">
    <property type="protein sequence ID" value="AEC10527.1"/>
    <property type="molecule type" value="Genomic_DNA"/>
</dbReference>
<dbReference type="EMBL" id="AF361829">
    <property type="protein sequence ID" value="AAK32841.1"/>
    <property type="molecule type" value="mRNA"/>
</dbReference>
<dbReference type="EMBL" id="AK220726">
    <property type="protein sequence ID" value="BAD93862.1"/>
    <property type="status" value="ALT_INIT"/>
    <property type="molecule type" value="mRNA"/>
</dbReference>
<dbReference type="PIR" id="H84887">
    <property type="entry name" value="H84887"/>
</dbReference>
<dbReference type="RefSeq" id="NP_566038.1">
    <property type="nucleotide sequence ID" value="NM_130085.4"/>
</dbReference>
<dbReference type="SMR" id="O22149"/>
<dbReference type="BioGRID" id="4466">
    <property type="interactions" value="2"/>
</dbReference>
<dbReference type="FunCoup" id="O22149">
    <property type="interactions" value="242"/>
</dbReference>
<dbReference type="IntAct" id="O22149">
    <property type="interactions" value="2"/>
</dbReference>
<dbReference type="STRING" id="3702.O22149"/>
<dbReference type="GlyCosmos" id="O22149">
    <property type="glycosylation" value="2 sites, No reported glycans"/>
</dbReference>
<dbReference type="GlyGen" id="O22149">
    <property type="glycosylation" value="2 sites"/>
</dbReference>
<dbReference type="PaxDb" id="3702-AT2G45220.1"/>
<dbReference type="ProteomicsDB" id="236643"/>
<dbReference type="EnsemblPlants" id="AT2G45220.1">
    <property type="protein sequence ID" value="AT2G45220.1"/>
    <property type="gene ID" value="AT2G45220"/>
</dbReference>
<dbReference type="GeneID" id="819130"/>
<dbReference type="Gramene" id="AT2G45220.1">
    <property type="protein sequence ID" value="AT2G45220.1"/>
    <property type="gene ID" value="AT2G45220"/>
</dbReference>
<dbReference type="KEGG" id="ath:AT2G45220"/>
<dbReference type="Araport" id="AT2G45220"/>
<dbReference type="TAIR" id="AT2G45220">
    <property type="gene designation" value="PME17"/>
</dbReference>
<dbReference type="eggNOG" id="ENOG502QSQ4">
    <property type="taxonomic scope" value="Eukaryota"/>
</dbReference>
<dbReference type="HOGENOM" id="CLU_012243_9_1_1"/>
<dbReference type="InParanoid" id="O22149"/>
<dbReference type="OMA" id="FLTHNSN"/>
<dbReference type="PhylomeDB" id="O22149"/>
<dbReference type="BioCyc" id="ARA:AT2G45220-MONOMER"/>
<dbReference type="UniPathway" id="UPA00545">
    <property type="reaction ID" value="UER00823"/>
</dbReference>
<dbReference type="PRO" id="PR:O22149"/>
<dbReference type="Proteomes" id="UP000006548">
    <property type="component" value="Chromosome 2"/>
</dbReference>
<dbReference type="ExpressionAtlas" id="O22149">
    <property type="expression patterns" value="baseline and differential"/>
</dbReference>
<dbReference type="GO" id="GO:0005576">
    <property type="term" value="C:extracellular region"/>
    <property type="evidence" value="ECO:0007669"/>
    <property type="project" value="UniProtKB-KW"/>
</dbReference>
<dbReference type="GO" id="GO:0004857">
    <property type="term" value="F:enzyme inhibitor activity"/>
    <property type="evidence" value="ECO:0007669"/>
    <property type="project" value="InterPro"/>
</dbReference>
<dbReference type="GO" id="GO:0030599">
    <property type="term" value="F:pectinesterase activity"/>
    <property type="evidence" value="ECO:0007669"/>
    <property type="project" value="UniProtKB-EC"/>
</dbReference>
<dbReference type="GO" id="GO:0042545">
    <property type="term" value="P:cell wall modification"/>
    <property type="evidence" value="ECO:0007669"/>
    <property type="project" value="InterPro"/>
</dbReference>
<dbReference type="GO" id="GO:0050829">
    <property type="term" value="P:defense response to Gram-negative bacterium"/>
    <property type="evidence" value="ECO:0000315"/>
    <property type="project" value="TAIR"/>
</dbReference>
<dbReference type="GO" id="GO:0045490">
    <property type="term" value="P:pectin catabolic process"/>
    <property type="evidence" value="ECO:0007669"/>
    <property type="project" value="UniProtKB-UniPathway"/>
</dbReference>
<dbReference type="GO" id="GO:0009617">
    <property type="term" value="P:response to bacterium"/>
    <property type="evidence" value="ECO:0000270"/>
    <property type="project" value="TAIR"/>
</dbReference>
<dbReference type="GO" id="GO:0009620">
    <property type="term" value="P:response to fungus"/>
    <property type="evidence" value="ECO:0000270"/>
    <property type="project" value="TAIR"/>
</dbReference>
<dbReference type="CDD" id="cd15798">
    <property type="entry name" value="PMEI-like_3"/>
    <property type="match status" value="1"/>
</dbReference>
<dbReference type="FunFam" id="1.20.140.40:FF:000013">
    <property type="entry name" value="Pectinesterase"/>
    <property type="match status" value="1"/>
</dbReference>
<dbReference type="FunFam" id="2.160.20.10:FF:000001">
    <property type="entry name" value="Pectinesterase"/>
    <property type="match status" value="1"/>
</dbReference>
<dbReference type="Gene3D" id="1.20.140.40">
    <property type="entry name" value="Invertase/pectin methylesterase inhibitor family protein"/>
    <property type="match status" value="1"/>
</dbReference>
<dbReference type="Gene3D" id="2.160.20.10">
    <property type="entry name" value="Single-stranded right-handed beta-helix, Pectin lyase-like"/>
    <property type="match status" value="1"/>
</dbReference>
<dbReference type="InterPro" id="IPR006633">
    <property type="entry name" value="Carb-bd_sugar_hydrolysis-dom"/>
</dbReference>
<dbReference type="InterPro" id="IPR035513">
    <property type="entry name" value="Invertase/methylesterase_inhib"/>
</dbReference>
<dbReference type="InterPro" id="IPR012334">
    <property type="entry name" value="Pectin_lyas_fold"/>
</dbReference>
<dbReference type="InterPro" id="IPR011050">
    <property type="entry name" value="Pectin_lyase_fold/virulence"/>
</dbReference>
<dbReference type="InterPro" id="IPR033131">
    <property type="entry name" value="Pectinesterase_Asp_AS"/>
</dbReference>
<dbReference type="InterPro" id="IPR000070">
    <property type="entry name" value="Pectinesterase_cat"/>
</dbReference>
<dbReference type="InterPro" id="IPR006501">
    <property type="entry name" value="Pectinesterase_inhib_dom"/>
</dbReference>
<dbReference type="NCBIfam" id="TIGR01614">
    <property type="entry name" value="PME_inhib"/>
    <property type="match status" value="1"/>
</dbReference>
<dbReference type="PANTHER" id="PTHR31707">
    <property type="entry name" value="PECTINESTERASE"/>
    <property type="match status" value="1"/>
</dbReference>
<dbReference type="Pfam" id="PF01095">
    <property type="entry name" value="Pectinesterase"/>
    <property type="match status" value="1"/>
</dbReference>
<dbReference type="Pfam" id="PF04043">
    <property type="entry name" value="PMEI"/>
    <property type="match status" value="1"/>
</dbReference>
<dbReference type="SMART" id="SM00722">
    <property type="entry name" value="CASH"/>
    <property type="match status" value="1"/>
</dbReference>
<dbReference type="SMART" id="SM00856">
    <property type="entry name" value="PMEI"/>
    <property type="match status" value="1"/>
</dbReference>
<dbReference type="SUPFAM" id="SSF51126">
    <property type="entry name" value="Pectin lyase-like"/>
    <property type="match status" value="1"/>
</dbReference>
<dbReference type="SUPFAM" id="SSF101148">
    <property type="entry name" value="Plant invertase/pectin methylesterase inhibitor"/>
    <property type="match status" value="1"/>
</dbReference>
<dbReference type="PROSITE" id="PS00503">
    <property type="entry name" value="PECTINESTERASE_2"/>
    <property type="match status" value="1"/>
</dbReference>
<proteinExistence type="evidence at transcript level"/>
<comment type="function">
    <text evidence="1">Acts in the modification of cell walls via demethylesterification of cell wall pectin.</text>
</comment>
<comment type="catalytic activity">
    <reaction>
        <text>[(1-&gt;4)-alpha-D-galacturonosyl methyl ester](n) + n H2O = [(1-&gt;4)-alpha-D-galacturonosyl](n) + n methanol + n H(+)</text>
        <dbReference type="Rhea" id="RHEA:22380"/>
        <dbReference type="Rhea" id="RHEA-COMP:14570"/>
        <dbReference type="Rhea" id="RHEA-COMP:14573"/>
        <dbReference type="ChEBI" id="CHEBI:15377"/>
        <dbReference type="ChEBI" id="CHEBI:15378"/>
        <dbReference type="ChEBI" id="CHEBI:17790"/>
        <dbReference type="ChEBI" id="CHEBI:140522"/>
        <dbReference type="ChEBI" id="CHEBI:140523"/>
        <dbReference type="EC" id="3.1.1.11"/>
    </reaction>
</comment>
<comment type="pathway">
    <text>Glycan metabolism; pectin degradation; 2-dehydro-3-deoxy-D-gluconate from pectin: step 1/5.</text>
</comment>
<comment type="subcellular location">
    <subcellularLocation>
        <location evidence="1">Secreted</location>
        <location evidence="1">Cell wall</location>
    </subcellularLocation>
</comment>
<comment type="tissue specificity">
    <text evidence="4 5">Expressed in siliques.</text>
</comment>
<comment type="developmental stage">
    <text evidence="4">Expressed during late developmental phases of siliques.</text>
</comment>
<comment type="miscellaneous">
    <text>The PMEI region may act as an autoinhibitory domain and prevent untimely PME activity during transport.</text>
</comment>
<comment type="similarity">
    <text evidence="6">In the N-terminal section; belongs to the PMEI family.</text>
</comment>
<comment type="similarity">
    <text evidence="6">In the C-terminal section; belongs to the pectinesterase family.</text>
</comment>
<comment type="sequence caution" evidence="6">
    <conflict type="erroneous initiation">
        <sequence resource="EMBL-CDS" id="BAD93862"/>
    </conflict>
</comment>
<evidence type="ECO:0000250" key="1"/>
<evidence type="ECO:0000255" key="2"/>
<evidence type="ECO:0000255" key="3">
    <source>
        <dbReference type="PROSITE-ProRule" id="PRU10040"/>
    </source>
</evidence>
<evidence type="ECO:0000269" key="4">
    <source>
    </source>
</evidence>
<evidence type="ECO:0000269" key="5">
    <source>
    </source>
</evidence>
<evidence type="ECO:0000305" key="6"/>
<protein>
    <recommendedName>
        <fullName>Probable pectinesterase/pectinesterase inhibitor 17</fullName>
    </recommendedName>
    <domain>
        <recommendedName>
            <fullName>Pectinesterase inhibitor 17</fullName>
        </recommendedName>
        <alternativeName>
            <fullName>Pectin methylesterase inhibitor 17</fullName>
        </alternativeName>
    </domain>
    <domain>
        <recommendedName>
            <fullName>Pectinesterase 17</fullName>
            <shortName>PE 17</shortName>
            <ecNumber>3.1.1.11</ecNumber>
        </recommendedName>
        <alternativeName>
            <fullName>Pectin methylesterase 17</fullName>
            <shortName>AtPME17</shortName>
        </alternativeName>
    </domain>
</protein>
<accession>O22149</accession>
<accession>Q570I2</accession>
<accession>Q9ASU4</accession>
<sequence>MMAFRAYIINFVILCILVASTVSGYNQKDVKAWCSQTPNPKPCEYFLTHNSNNEPIKSESEFLKISMKLVLDRAILAKTHAFTLGPKCRDTREKAAWEDCIKLYDLTVSKINETMDPNVKCSKLDAQTWLSTALTNLDTCRAGFLELGVTDIVLPLMSNNVSNLLCNTLAINKVPFNYTPPEKDGFPSWVKPGDRKLLQSSTPKDNAVVAKDGSGNFKTIKEAIDAASGSGRFVIYVKQGVYSENLEIRKKNVMLRGDGIGKTIITGSKSVGGGTTTFNSATVAAVGDGFIARGITFRNTAGASNEQAVALRSGSDLSVFYQCSFEAYQDTLYVHSNRQFYRDCDVYGTVDFIFGNAAAVLQNCNIFARRPRSKTNTITAQGRSDPNQNTGIIIHNSRVTAASDLRPVLGSTKTYLGRPWRQYSRTVFMKTSLDSLIDPRGWLEWDGNFALKTLFYAEFQNTGPGASTSGRVTWPGFRVLGSASEASKFTVGTFLAGGSWIPSSVPFTSGL</sequence>
<gene>
    <name type="primary">PME17</name>
    <name type="synonym">ARATH17</name>
    <name type="ordered locus">At2g45220</name>
    <name type="ORF">F4L23.27</name>
</gene>
<keyword id="KW-0063">Aspartyl esterase</keyword>
<keyword id="KW-0134">Cell wall</keyword>
<keyword id="KW-0961">Cell wall biogenesis/degradation</keyword>
<keyword id="KW-1015">Disulfide bond</keyword>
<keyword id="KW-0325">Glycoprotein</keyword>
<keyword id="KW-0378">Hydrolase</keyword>
<keyword id="KW-1185">Reference proteome</keyword>
<keyword id="KW-0964">Secreted</keyword>
<keyword id="KW-0732">Signal</keyword>
<reference key="1">
    <citation type="journal article" date="1999" name="Nature">
        <title>Sequence and analysis of chromosome 2 of the plant Arabidopsis thaliana.</title>
        <authorList>
            <person name="Lin X."/>
            <person name="Kaul S."/>
            <person name="Rounsley S.D."/>
            <person name="Shea T.P."/>
            <person name="Benito M.-I."/>
            <person name="Town C.D."/>
            <person name="Fujii C.Y."/>
            <person name="Mason T.M."/>
            <person name="Bowman C.L."/>
            <person name="Barnstead M.E."/>
            <person name="Feldblyum T.V."/>
            <person name="Buell C.R."/>
            <person name="Ketchum K.A."/>
            <person name="Lee J.J."/>
            <person name="Ronning C.M."/>
            <person name="Koo H.L."/>
            <person name="Moffat K.S."/>
            <person name="Cronin L.A."/>
            <person name="Shen M."/>
            <person name="Pai G."/>
            <person name="Van Aken S."/>
            <person name="Umayam L."/>
            <person name="Tallon L.J."/>
            <person name="Gill J.E."/>
            <person name="Adams M.D."/>
            <person name="Carrera A.J."/>
            <person name="Creasy T.H."/>
            <person name="Goodman H.M."/>
            <person name="Somerville C.R."/>
            <person name="Copenhaver G.P."/>
            <person name="Preuss D."/>
            <person name="Nierman W.C."/>
            <person name="White O."/>
            <person name="Eisen J.A."/>
            <person name="Salzberg S.L."/>
            <person name="Fraser C.M."/>
            <person name="Venter J.C."/>
        </authorList>
    </citation>
    <scope>NUCLEOTIDE SEQUENCE [LARGE SCALE GENOMIC DNA]</scope>
    <source>
        <strain>cv. Columbia</strain>
    </source>
</reference>
<reference key="2">
    <citation type="journal article" date="2017" name="Plant J.">
        <title>Araport11: a complete reannotation of the Arabidopsis thaliana reference genome.</title>
        <authorList>
            <person name="Cheng C.Y."/>
            <person name="Krishnakumar V."/>
            <person name="Chan A.P."/>
            <person name="Thibaud-Nissen F."/>
            <person name="Schobel S."/>
            <person name="Town C.D."/>
        </authorList>
    </citation>
    <scope>GENOME REANNOTATION</scope>
    <source>
        <strain>cv. Columbia</strain>
    </source>
</reference>
<reference key="3">
    <citation type="journal article" date="2003" name="Science">
        <title>Empirical analysis of transcriptional activity in the Arabidopsis genome.</title>
        <authorList>
            <person name="Yamada K."/>
            <person name="Lim J."/>
            <person name="Dale J.M."/>
            <person name="Chen H."/>
            <person name="Shinn P."/>
            <person name="Palm C.J."/>
            <person name="Southwick A.M."/>
            <person name="Wu H.C."/>
            <person name="Kim C.J."/>
            <person name="Nguyen M."/>
            <person name="Pham P.K."/>
            <person name="Cheuk R.F."/>
            <person name="Karlin-Newmann G."/>
            <person name="Liu S.X."/>
            <person name="Lam B."/>
            <person name="Sakano H."/>
            <person name="Wu T."/>
            <person name="Yu G."/>
            <person name="Miranda M."/>
            <person name="Quach H.L."/>
            <person name="Tripp M."/>
            <person name="Chang C.H."/>
            <person name="Lee J.M."/>
            <person name="Toriumi M.J."/>
            <person name="Chan M.M."/>
            <person name="Tang C.C."/>
            <person name="Onodera C.S."/>
            <person name="Deng J.M."/>
            <person name="Akiyama K."/>
            <person name="Ansari Y."/>
            <person name="Arakawa T."/>
            <person name="Banh J."/>
            <person name="Banno F."/>
            <person name="Bowser L."/>
            <person name="Brooks S.Y."/>
            <person name="Carninci P."/>
            <person name="Chao Q."/>
            <person name="Choy N."/>
            <person name="Enju A."/>
            <person name="Goldsmith A.D."/>
            <person name="Gurjal M."/>
            <person name="Hansen N.F."/>
            <person name="Hayashizaki Y."/>
            <person name="Johnson-Hopson C."/>
            <person name="Hsuan V.W."/>
            <person name="Iida K."/>
            <person name="Karnes M."/>
            <person name="Khan S."/>
            <person name="Koesema E."/>
            <person name="Ishida J."/>
            <person name="Jiang P.X."/>
            <person name="Jones T."/>
            <person name="Kawai J."/>
            <person name="Kamiya A."/>
            <person name="Meyers C."/>
            <person name="Nakajima M."/>
            <person name="Narusaka M."/>
            <person name="Seki M."/>
            <person name="Sakurai T."/>
            <person name="Satou M."/>
            <person name="Tamse R."/>
            <person name="Vaysberg M."/>
            <person name="Wallender E.K."/>
            <person name="Wong C."/>
            <person name="Yamamura Y."/>
            <person name="Yuan S."/>
            <person name="Shinozaki K."/>
            <person name="Davis R.W."/>
            <person name="Theologis A."/>
            <person name="Ecker J.R."/>
        </authorList>
    </citation>
    <scope>NUCLEOTIDE SEQUENCE [LARGE SCALE MRNA]</scope>
    <source>
        <strain>cv. Columbia</strain>
    </source>
</reference>
<reference key="4">
    <citation type="submission" date="2005-03" db="EMBL/GenBank/DDBJ databases">
        <title>Large-scale analysis of RIKEN Arabidopsis full-length (RAFL) cDNAs.</title>
        <authorList>
            <person name="Totoki Y."/>
            <person name="Seki M."/>
            <person name="Ishida J."/>
            <person name="Nakajima M."/>
            <person name="Enju A."/>
            <person name="Kamiya A."/>
            <person name="Narusaka M."/>
            <person name="Shin-i T."/>
            <person name="Nakagawa M."/>
            <person name="Sakamoto N."/>
            <person name="Oishi K."/>
            <person name="Kohara Y."/>
            <person name="Kobayashi M."/>
            <person name="Toyoda A."/>
            <person name="Sakaki Y."/>
            <person name="Sakurai T."/>
            <person name="Iida K."/>
            <person name="Akiyama K."/>
            <person name="Satou M."/>
            <person name="Toyoda T."/>
            <person name="Konagaya A."/>
            <person name="Carninci P."/>
            <person name="Kawai J."/>
            <person name="Hayashizaki Y."/>
            <person name="Shinozaki K."/>
        </authorList>
    </citation>
    <scope>NUCLEOTIDE SEQUENCE [LARGE SCALE MRNA] OF 394-511</scope>
    <source>
        <strain>cv. Columbia</strain>
    </source>
</reference>
<reference key="5">
    <citation type="journal article" date="1998" name="Gene">
        <title>Characterization of the pectin methylesterase-like gene AtPME3: a new member of a gene family comprising at least 12 genes in Arabidopsis thaliana.</title>
        <authorList>
            <person name="Micheli F."/>
            <person name="Holliger C."/>
            <person name="Goldberg R."/>
            <person name="Richard L."/>
        </authorList>
    </citation>
    <scope>TISSUE SPECIFICITY</scope>
</reference>
<reference key="6">
    <citation type="journal article" date="2004" name="Carbohydr. Res.">
        <title>Pectin methylesterases: sequence-structural features and phylogenetic relationships.</title>
        <authorList>
            <person name="Markovic O."/>
            <person name="Janecek S."/>
        </authorList>
    </citation>
    <scope>GENE FAMILY</scope>
    <scope>NOMENCLATURE</scope>
</reference>
<reference key="7">
    <citation type="journal article" date="2006" name="Planta">
        <title>Comprehensive expression profiling of the pectin methylesterase gene family during silique development in Arabidopsis thaliana.</title>
        <authorList>
            <person name="Louvet R."/>
            <person name="Cavel E."/>
            <person name="Gutierrez L."/>
            <person name="Guenin S."/>
            <person name="Roger D."/>
            <person name="Gillet F."/>
            <person name="Guerineau F."/>
            <person name="Pelloux J."/>
        </authorList>
    </citation>
    <scope>TISSUE SPECIFICITY</scope>
    <scope>DEVELOPMENTAL STAGE</scope>
</reference>